<organism>
    <name type="scientific">Arabidopsis thaliana</name>
    <name type="common">Mouse-ear cress</name>
    <dbReference type="NCBI Taxonomy" id="3702"/>
    <lineage>
        <taxon>Eukaryota</taxon>
        <taxon>Viridiplantae</taxon>
        <taxon>Streptophyta</taxon>
        <taxon>Embryophyta</taxon>
        <taxon>Tracheophyta</taxon>
        <taxon>Spermatophyta</taxon>
        <taxon>Magnoliopsida</taxon>
        <taxon>eudicotyledons</taxon>
        <taxon>Gunneridae</taxon>
        <taxon>Pentapetalae</taxon>
        <taxon>rosids</taxon>
        <taxon>malvids</taxon>
        <taxon>Brassicales</taxon>
        <taxon>Brassicaceae</taxon>
        <taxon>Camelineae</taxon>
        <taxon>Arabidopsis</taxon>
    </lineage>
</organism>
<proteinExistence type="evidence at protein level"/>
<dbReference type="EMBL" id="AC006418">
    <property type="protein sequence ID" value="AAD20171.1"/>
    <property type="molecule type" value="Genomic_DNA"/>
</dbReference>
<dbReference type="EMBL" id="CP002685">
    <property type="protein sequence ID" value="AEC10728.1"/>
    <property type="molecule type" value="Genomic_DNA"/>
</dbReference>
<dbReference type="EMBL" id="CP002685">
    <property type="protein sequence ID" value="AEC10729.1"/>
    <property type="molecule type" value="Genomic_DNA"/>
</dbReference>
<dbReference type="EMBL" id="AY065237">
    <property type="protein sequence ID" value="AAL38713.1"/>
    <property type="molecule type" value="mRNA"/>
</dbReference>
<dbReference type="EMBL" id="BT000995">
    <property type="protein sequence ID" value="AAN41395.1"/>
    <property type="molecule type" value="mRNA"/>
</dbReference>
<dbReference type="EMBL" id="AK317202">
    <property type="protein sequence ID" value="BAH19886.1"/>
    <property type="molecule type" value="mRNA"/>
</dbReference>
<dbReference type="PIR" id="A84905">
    <property type="entry name" value="A84905"/>
</dbReference>
<dbReference type="RefSeq" id="NP_182184.1">
    <molecule id="Q9ZPX8-1"/>
    <property type="nucleotide sequence ID" value="NM_130226.6"/>
</dbReference>
<dbReference type="RefSeq" id="NP_973702.1">
    <molecule id="Q9ZPX8-2"/>
    <property type="nucleotide sequence ID" value="NM_201973.6"/>
</dbReference>
<dbReference type="SMR" id="Q9ZPX8"/>
<dbReference type="BioGRID" id="4608">
    <property type="interactions" value="2"/>
</dbReference>
<dbReference type="FunCoup" id="Q9ZPX8">
    <property type="interactions" value="19"/>
</dbReference>
<dbReference type="IntAct" id="Q9ZPX8">
    <property type="interactions" value="1"/>
</dbReference>
<dbReference type="STRING" id="3702.Q9ZPX8"/>
<dbReference type="iPTMnet" id="Q9ZPX8"/>
<dbReference type="PaxDb" id="3702-AT2G46610.1"/>
<dbReference type="ProteomicsDB" id="228101">
    <molecule id="Q9ZPX8-1"/>
</dbReference>
<dbReference type="EnsemblPlants" id="AT2G46610.1">
    <molecule id="Q9ZPX8-1"/>
    <property type="protein sequence ID" value="AT2G46610.1"/>
    <property type="gene ID" value="AT2G46610"/>
</dbReference>
<dbReference type="EnsemblPlants" id="AT2G46610.2">
    <molecule id="Q9ZPX8-2"/>
    <property type="protein sequence ID" value="AT2G46610.2"/>
    <property type="gene ID" value="AT2G46610"/>
</dbReference>
<dbReference type="GeneID" id="819273"/>
<dbReference type="Gramene" id="AT2G46610.1">
    <molecule id="Q9ZPX8-1"/>
    <property type="protein sequence ID" value="AT2G46610.1"/>
    <property type="gene ID" value="AT2G46610"/>
</dbReference>
<dbReference type="Gramene" id="AT2G46610.2">
    <molecule id="Q9ZPX8-2"/>
    <property type="protein sequence ID" value="AT2G46610.2"/>
    <property type="gene ID" value="AT2G46610"/>
</dbReference>
<dbReference type="KEGG" id="ath:AT2G46610"/>
<dbReference type="Araport" id="AT2G46610"/>
<dbReference type="TAIR" id="AT2G46610">
    <property type="gene designation" value="RS31A"/>
</dbReference>
<dbReference type="eggNOG" id="KOG0106">
    <property type="taxonomic scope" value="Eukaryota"/>
</dbReference>
<dbReference type="HOGENOM" id="CLU_043462_0_0_1"/>
<dbReference type="InParanoid" id="Q9ZPX8"/>
<dbReference type="OMA" id="CNSASIY"/>
<dbReference type="PhylomeDB" id="Q9ZPX8"/>
<dbReference type="CD-CODE" id="4299E36E">
    <property type="entry name" value="Nucleolus"/>
</dbReference>
<dbReference type="PRO" id="PR:Q9ZPX8"/>
<dbReference type="Proteomes" id="UP000006548">
    <property type="component" value="Chromosome 2"/>
</dbReference>
<dbReference type="ExpressionAtlas" id="Q9ZPX8">
    <property type="expression patterns" value="baseline and differential"/>
</dbReference>
<dbReference type="GO" id="GO:0016607">
    <property type="term" value="C:nuclear speck"/>
    <property type="evidence" value="ECO:0007669"/>
    <property type="project" value="UniProtKB-SubCell"/>
</dbReference>
<dbReference type="GO" id="GO:0005681">
    <property type="term" value="C:spliceosomal complex"/>
    <property type="evidence" value="ECO:0007669"/>
    <property type="project" value="UniProtKB-KW"/>
</dbReference>
<dbReference type="GO" id="GO:0003723">
    <property type="term" value="F:RNA binding"/>
    <property type="evidence" value="ECO:0007669"/>
    <property type="project" value="UniProtKB-KW"/>
</dbReference>
<dbReference type="GO" id="GO:0006397">
    <property type="term" value="P:mRNA processing"/>
    <property type="evidence" value="ECO:0007669"/>
    <property type="project" value="UniProtKB-KW"/>
</dbReference>
<dbReference type="GO" id="GO:0008380">
    <property type="term" value="P:RNA splicing"/>
    <property type="evidence" value="ECO:0007669"/>
    <property type="project" value="UniProtKB-KW"/>
</dbReference>
<dbReference type="FunFam" id="3.30.70.330:FF:000299">
    <property type="entry name" value="Serine/arginine-rich splicing factor RS31"/>
    <property type="match status" value="1"/>
</dbReference>
<dbReference type="Gene3D" id="3.30.70.330">
    <property type="match status" value="2"/>
</dbReference>
<dbReference type="InterPro" id="IPR012677">
    <property type="entry name" value="Nucleotide-bd_a/b_plait_sf"/>
</dbReference>
<dbReference type="InterPro" id="IPR035979">
    <property type="entry name" value="RBD_domain_sf"/>
</dbReference>
<dbReference type="InterPro" id="IPR000504">
    <property type="entry name" value="RRM_dom"/>
</dbReference>
<dbReference type="InterPro" id="IPR050907">
    <property type="entry name" value="SRSF"/>
</dbReference>
<dbReference type="PANTHER" id="PTHR23147">
    <property type="entry name" value="SERINE/ARGININE RICH SPLICING FACTOR"/>
    <property type="match status" value="1"/>
</dbReference>
<dbReference type="Pfam" id="PF00076">
    <property type="entry name" value="RRM_1"/>
    <property type="match status" value="2"/>
</dbReference>
<dbReference type="SMART" id="SM00360">
    <property type="entry name" value="RRM"/>
    <property type="match status" value="2"/>
</dbReference>
<dbReference type="SUPFAM" id="SSF54928">
    <property type="entry name" value="RNA-binding domain, RBD"/>
    <property type="match status" value="1"/>
</dbReference>
<dbReference type="PROSITE" id="PS50102">
    <property type="entry name" value="RRM"/>
    <property type="match status" value="2"/>
</dbReference>
<feature type="chain" id="PRO_0000429602" description="Serine/arginine-rich splicing factor RS31A">
    <location>
        <begin position="1"/>
        <end position="250"/>
    </location>
</feature>
<feature type="domain" description="RRM 1" evidence="5">
    <location>
        <begin position="2"/>
        <end position="74"/>
    </location>
</feature>
<feature type="domain" description="RRM 2" evidence="5">
    <location>
        <begin position="95"/>
        <end position="166"/>
    </location>
</feature>
<feature type="region of interest" description="Disordered" evidence="6">
    <location>
        <begin position="170"/>
        <end position="250"/>
    </location>
</feature>
<feature type="compositionally biased region" description="Basic residues" evidence="6">
    <location>
        <begin position="177"/>
        <end position="191"/>
    </location>
</feature>
<feature type="compositionally biased region" description="Basic and acidic residues" evidence="6">
    <location>
        <begin position="192"/>
        <end position="230"/>
    </location>
</feature>
<feature type="modified residue" description="Phosphoserine" evidence="1">
    <location>
        <position position="183"/>
    </location>
</feature>
<feature type="modified residue" description="Phosphoserine" evidence="1">
    <location>
        <position position="185"/>
    </location>
</feature>
<feature type="modified residue" description="Phosphoserine" evidence="2">
    <location>
        <position position="201"/>
    </location>
</feature>
<feature type="modified residue" description="Phosphoserine" evidence="4">
    <location>
        <position position="218"/>
    </location>
</feature>
<feature type="modified residue" description="Phosphoserine" evidence="3">
    <location>
        <position position="243"/>
    </location>
</feature>
<feature type="splice variant" id="VSP_054996" description="In isoform 2." evidence="8">
    <original>MRHVYVGNFDYDTRHSDLERLFSKFGRVKRVDMKS</original>
    <variation>MYTSLHIDA</variation>
    <location>
        <begin position="1"/>
        <end position="35"/>
    </location>
</feature>
<accession>Q9ZPX8</accession>
<accession>F4IJ76</accession>
<keyword id="KW-0025">Alternative splicing</keyword>
<keyword id="KW-0507">mRNA processing</keyword>
<keyword id="KW-0508">mRNA splicing</keyword>
<keyword id="KW-0539">Nucleus</keyword>
<keyword id="KW-0597">Phosphoprotein</keyword>
<keyword id="KW-1185">Reference proteome</keyword>
<keyword id="KW-0677">Repeat</keyword>
<keyword id="KW-0694">RNA-binding</keyword>
<keyword id="KW-0747">Spliceosome</keyword>
<evidence type="ECO:0000250" key="1">
    <source>
        <dbReference type="UniProtKB" id="P92964"/>
    </source>
</evidence>
<evidence type="ECO:0000250" key="2">
    <source>
        <dbReference type="UniProtKB" id="P92965"/>
    </source>
</evidence>
<evidence type="ECO:0000250" key="3">
    <source>
        <dbReference type="UniProtKB" id="P92966"/>
    </source>
</evidence>
<evidence type="ECO:0000250" key="4">
    <source>
        <dbReference type="UniProtKB" id="Q9FYB7"/>
    </source>
</evidence>
<evidence type="ECO:0000255" key="5">
    <source>
        <dbReference type="PROSITE-ProRule" id="PRU00176"/>
    </source>
</evidence>
<evidence type="ECO:0000256" key="6">
    <source>
        <dbReference type="SAM" id="MobiDB-lite"/>
    </source>
</evidence>
<evidence type="ECO:0000269" key="7">
    <source>
    </source>
</evidence>
<evidence type="ECO:0000305" key="8"/>
<evidence type="ECO:0000305" key="9">
    <source>
    </source>
</evidence>
<protein>
    <recommendedName>
        <fullName>Serine/arginine-rich splicing factor RS31A</fullName>
        <shortName>At-RS31A</shortName>
        <shortName>At-RSp31A</shortName>
        <shortName>AtRS31A</shortName>
    </recommendedName>
    <alternativeName>
        <fullName>Arginine/serine-rich splicing factor RS32</fullName>
        <shortName>At-RSp32</shortName>
    </alternativeName>
</protein>
<reference key="1">
    <citation type="journal article" date="1999" name="Nature">
        <title>Sequence and analysis of chromosome 2 of the plant Arabidopsis thaliana.</title>
        <authorList>
            <person name="Lin X."/>
            <person name="Kaul S."/>
            <person name="Rounsley S.D."/>
            <person name="Shea T.P."/>
            <person name="Benito M.-I."/>
            <person name="Town C.D."/>
            <person name="Fujii C.Y."/>
            <person name="Mason T.M."/>
            <person name="Bowman C.L."/>
            <person name="Barnstead M.E."/>
            <person name="Feldblyum T.V."/>
            <person name="Buell C.R."/>
            <person name="Ketchum K.A."/>
            <person name="Lee J.J."/>
            <person name="Ronning C.M."/>
            <person name="Koo H.L."/>
            <person name="Moffat K.S."/>
            <person name="Cronin L.A."/>
            <person name="Shen M."/>
            <person name="Pai G."/>
            <person name="Van Aken S."/>
            <person name="Umayam L."/>
            <person name="Tallon L.J."/>
            <person name="Gill J.E."/>
            <person name="Adams M.D."/>
            <person name="Carrera A.J."/>
            <person name="Creasy T.H."/>
            <person name="Goodman H.M."/>
            <person name="Somerville C.R."/>
            <person name="Copenhaver G.P."/>
            <person name="Preuss D."/>
            <person name="Nierman W.C."/>
            <person name="White O."/>
            <person name="Eisen J.A."/>
            <person name="Salzberg S.L."/>
            <person name="Fraser C.M."/>
            <person name="Venter J.C."/>
        </authorList>
    </citation>
    <scope>NUCLEOTIDE SEQUENCE [LARGE SCALE GENOMIC DNA]</scope>
    <source>
        <strain>cv. Columbia</strain>
    </source>
</reference>
<reference key="2">
    <citation type="journal article" date="2017" name="Plant J.">
        <title>Araport11: a complete reannotation of the Arabidopsis thaliana reference genome.</title>
        <authorList>
            <person name="Cheng C.Y."/>
            <person name="Krishnakumar V."/>
            <person name="Chan A.P."/>
            <person name="Thibaud-Nissen F."/>
            <person name="Schobel S."/>
            <person name="Town C.D."/>
        </authorList>
    </citation>
    <scope>GENOME REANNOTATION</scope>
    <source>
        <strain>cv. Columbia</strain>
    </source>
</reference>
<reference key="3">
    <citation type="journal article" date="2003" name="Science">
        <title>Empirical analysis of transcriptional activity in the Arabidopsis genome.</title>
        <authorList>
            <person name="Yamada K."/>
            <person name="Lim J."/>
            <person name="Dale J.M."/>
            <person name="Chen H."/>
            <person name="Shinn P."/>
            <person name="Palm C.J."/>
            <person name="Southwick A.M."/>
            <person name="Wu H.C."/>
            <person name="Kim C.J."/>
            <person name="Nguyen M."/>
            <person name="Pham P.K."/>
            <person name="Cheuk R.F."/>
            <person name="Karlin-Newmann G."/>
            <person name="Liu S.X."/>
            <person name="Lam B."/>
            <person name="Sakano H."/>
            <person name="Wu T."/>
            <person name="Yu G."/>
            <person name="Miranda M."/>
            <person name="Quach H.L."/>
            <person name="Tripp M."/>
            <person name="Chang C.H."/>
            <person name="Lee J.M."/>
            <person name="Toriumi M.J."/>
            <person name="Chan M.M."/>
            <person name="Tang C.C."/>
            <person name="Onodera C.S."/>
            <person name="Deng J.M."/>
            <person name="Akiyama K."/>
            <person name="Ansari Y."/>
            <person name="Arakawa T."/>
            <person name="Banh J."/>
            <person name="Banno F."/>
            <person name="Bowser L."/>
            <person name="Brooks S.Y."/>
            <person name="Carninci P."/>
            <person name="Chao Q."/>
            <person name="Choy N."/>
            <person name="Enju A."/>
            <person name="Goldsmith A.D."/>
            <person name="Gurjal M."/>
            <person name="Hansen N.F."/>
            <person name="Hayashizaki Y."/>
            <person name="Johnson-Hopson C."/>
            <person name="Hsuan V.W."/>
            <person name="Iida K."/>
            <person name="Karnes M."/>
            <person name="Khan S."/>
            <person name="Koesema E."/>
            <person name="Ishida J."/>
            <person name="Jiang P.X."/>
            <person name="Jones T."/>
            <person name="Kawai J."/>
            <person name="Kamiya A."/>
            <person name="Meyers C."/>
            <person name="Nakajima M."/>
            <person name="Narusaka M."/>
            <person name="Seki M."/>
            <person name="Sakurai T."/>
            <person name="Satou M."/>
            <person name="Tamse R."/>
            <person name="Vaysberg M."/>
            <person name="Wallender E.K."/>
            <person name="Wong C."/>
            <person name="Yamamura Y."/>
            <person name="Yuan S."/>
            <person name="Shinozaki K."/>
            <person name="Davis R.W."/>
            <person name="Theologis A."/>
            <person name="Ecker J.R."/>
        </authorList>
    </citation>
    <scope>NUCLEOTIDE SEQUENCE [LARGE SCALE MRNA] (ISOFORM 1)</scope>
    <source>
        <strain>cv. Columbia</strain>
    </source>
</reference>
<reference key="4">
    <citation type="journal article" date="2009" name="DNA Res.">
        <title>Analysis of multiple occurrences of alternative splicing events in Arabidopsis thaliana using novel sequenced full-length cDNAs.</title>
        <authorList>
            <person name="Iida K."/>
            <person name="Fukami-Kobayashi K."/>
            <person name="Toyoda A."/>
            <person name="Sakaki Y."/>
            <person name="Kobayashi M."/>
            <person name="Seki M."/>
            <person name="Shinozaki K."/>
        </authorList>
    </citation>
    <scope>NUCLEOTIDE SEQUENCE [LARGE SCALE MRNA] (ISOFORM 1)</scope>
    <source>
        <strain>cv. Columbia</strain>
        <tissue>Rosette leaf</tissue>
    </source>
</reference>
<reference key="5">
    <citation type="journal article" date="2006" name="Mol. Biol. Evol.">
        <title>Survey of conserved alternative splicing events of mRNAs encoding SR proteins in land plants.</title>
        <authorList>
            <person name="Iida K."/>
            <person name="Go M."/>
        </authorList>
    </citation>
    <scope>ALTERNATIVE SPLICING</scope>
</reference>
<reference key="6">
    <citation type="journal article" date="2006" name="Nucleic Acids Res.">
        <title>Evolutionary conservation and regulation of particular alternative splicing events in plant SR proteins.</title>
        <authorList>
            <person name="Kalyna M."/>
            <person name="Lopato S."/>
            <person name="Voronin V."/>
            <person name="Barta A."/>
        </authorList>
    </citation>
    <scope>ALTERNATIVE SPLICING</scope>
</reference>
<reference key="7">
    <citation type="journal article" date="2007" name="Plant J.">
        <title>Alternative splicing of pre-mRNAs of Arabidopsis serine/arginine-rich proteins: regulation by hormones and stresses.</title>
        <authorList>
            <person name="Palusa S.G."/>
            <person name="Ali G.S."/>
            <person name="Reddy A.S."/>
        </authorList>
    </citation>
    <scope>ALTERNATIVE SPLICING</scope>
    <scope>INDUCTION</scope>
</reference>
<reference key="8">
    <citation type="journal article" date="2010" name="Plant Cell">
        <title>Implementing a rational and consistent nomenclature for serine/arginine-rich protein splicing factors (SR proteins) in plants.</title>
        <authorList>
            <person name="Barta A."/>
            <person name="Kalyna M."/>
            <person name="Reddy A.S."/>
        </authorList>
    </citation>
    <scope>GENE FAMILY</scope>
    <scope>NOMENCLATURE</scope>
</reference>
<reference key="9">
    <citation type="journal article" date="2011" name="PLoS Genet.">
        <title>Transportin-SR is required for proper splicing of resistance genes and plant immunity.</title>
        <authorList>
            <person name="Xu S."/>
            <person name="Zhang Z."/>
            <person name="Jing B."/>
            <person name="Gannon P."/>
            <person name="Ding J."/>
            <person name="Xu F."/>
            <person name="Li X."/>
            <person name="Zhang Y."/>
        </authorList>
    </citation>
    <scope>INTERACTION WITH MOS14</scope>
</reference>
<reference key="10">
    <citation type="journal article" date="2011" name="PLoS ONE">
        <title>Comparative analysis of serine/arginine-rich proteins across 27 eukaryotes: insights into sub-family classification and extent of alternative splicing.</title>
        <authorList>
            <person name="Richardson D.N."/>
            <person name="Rogers M.F."/>
            <person name="Labadorf A."/>
            <person name="Ben-Hur A."/>
            <person name="Guo H."/>
            <person name="Paterson A.H."/>
            <person name="Reddy A.S.N."/>
        </authorList>
    </citation>
    <scope>GENE FAMILY</scope>
</reference>
<gene>
    <name type="primary">RS31A</name>
    <name type="synonym">RSP31A</name>
    <name type="synonym">RSP32</name>
    <name type="ordered locus">At2g46610</name>
    <name type="ORF">F13A10.14</name>
</gene>
<sequence>MRHVYVGNFDYDTRHSDLERLFSKFGRVKRVDMKSGYAFVYFEDERDAEDAIRRTDNTTFGYGRRKLSVEWAKDFQGERGKPRDGKAVSNQRPTKTLFVINFDPIRTRERDMERHFEPYGKVLNVRMRRNFAFVQFATQEDATKALDSTHNSKLLDKVVSVEYALREAGEREDRYAGSRRRRSPSPVYRRRPSPDYTRRRSPEYDRYKGPAPYERRKSPDYGRRSSDYGRARARSPGYDRSRSPIQRARG</sequence>
<comment type="function">
    <text>Probably involved in intron recognition and spliceosome assembly.</text>
</comment>
<comment type="subunit">
    <text evidence="7 8">Component of the spliceosome (Probable). Interacts with MOS14 (PubMed:21738492).</text>
</comment>
<comment type="subcellular location">
    <subcellularLocation>
        <location evidence="1">Nucleus speckle</location>
    </subcellularLocation>
    <subcellularLocation>
        <location evidence="1">Nucleus</location>
        <location evidence="1">Nucleoplasm</location>
    </subcellularLocation>
</comment>
<comment type="alternative products">
    <event type="alternative splicing"/>
    <isoform>
        <id>Q9ZPX8-1</id>
        <name>1</name>
        <sequence type="displayed"/>
    </isoform>
    <isoform>
        <id>Q9ZPX8-2</id>
        <name>2</name>
        <sequence type="described" ref="VSP_054996"/>
    </isoform>
</comment>
<comment type="miscellaneous">
    <text evidence="9">The splicing pattern of the pre-mRNA is regulated in a tissue-specific manner and by development, and changes in response to various types of abiotic stresses.</text>
</comment>
<comment type="similarity">
    <text evidence="8">Belongs to the splicing factor SR family. RS subfamily.</text>
</comment>
<name>RS31A_ARATH</name>